<proteinExistence type="inferred from homology"/>
<organism>
    <name type="scientific">Cyanothece sp. (strain PCC 7425 / ATCC 29141)</name>
    <dbReference type="NCBI Taxonomy" id="395961"/>
    <lineage>
        <taxon>Bacteria</taxon>
        <taxon>Bacillati</taxon>
        <taxon>Cyanobacteriota</taxon>
        <taxon>Cyanophyceae</taxon>
        <taxon>Gomontiellales</taxon>
        <taxon>Cyanothecaceae</taxon>
        <taxon>Cyanothece</taxon>
    </lineage>
</organism>
<dbReference type="EMBL" id="CP001344">
    <property type="protein sequence ID" value="ACL47416.1"/>
    <property type="molecule type" value="Genomic_DNA"/>
</dbReference>
<dbReference type="SMR" id="B8HQ19"/>
<dbReference type="STRING" id="395961.Cyan7425_5123"/>
<dbReference type="KEGG" id="cyn:Cyan7425_5123"/>
<dbReference type="eggNOG" id="COG1420">
    <property type="taxonomic scope" value="Bacteria"/>
</dbReference>
<dbReference type="HOGENOM" id="CLU_050019_1_0_3"/>
<dbReference type="OrthoDB" id="9783139at2"/>
<dbReference type="GO" id="GO:0003677">
    <property type="term" value="F:DNA binding"/>
    <property type="evidence" value="ECO:0007669"/>
    <property type="project" value="InterPro"/>
</dbReference>
<dbReference type="GO" id="GO:0045892">
    <property type="term" value="P:negative regulation of DNA-templated transcription"/>
    <property type="evidence" value="ECO:0007669"/>
    <property type="project" value="UniProtKB-UniRule"/>
</dbReference>
<dbReference type="Gene3D" id="3.30.450.40">
    <property type="match status" value="1"/>
</dbReference>
<dbReference type="Gene3D" id="3.30.390.60">
    <property type="entry name" value="Heat-inducible transcription repressor hrca homolog, domain 3"/>
    <property type="match status" value="1"/>
</dbReference>
<dbReference type="Gene3D" id="1.10.10.10">
    <property type="entry name" value="Winged helix-like DNA-binding domain superfamily/Winged helix DNA-binding domain"/>
    <property type="match status" value="1"/>
</dbReference>
<dbReference type="HAMAP" id="MF_00081">
    <property type="entry name" value="HrcA"/>
    <property type="match status" value="1"/>
</dbReference>
<dbReference type="InterPro" id="IPR029016">
    <property type="entry name" value="GAF-like_dom_sf"/>
</dbReference>
<dbReference type="InterPro" id="IPR002571">
    <property type="entry name" value="HrcA"/>
</dbReference>
<dbReference type="InterPro" id="IPR021153">
    <property type="entry name" value="HrcA_C"/>
</dbReference>
<dbReference type="InterPro" id="IPR036388">
    <property type="entry name" value="WH-like_DNA-bd_sf"/>
</dbReference>
<dbReference type="InterPro" id="IPR036390">
    <property type="entry name" value="WH_DNA-bd_sf"/>
</dbReference>
<dbReference type="InterPro" id="IPR023120">
    <property type="entry name" value="WHTH_transcript_rep_HrcA_IDD"/>
</dbReference>
<dbReference type="NCBIfam" id="TIGR00331">
    <property type="entry name" value="hrcA"/>
    <property type="match status" value="1"/>
</dbReference>
<dbReference type="PANTHER" id="PTHR34824">
    <property type="entry name" value="HEAT-INDUCIBLE TRANSCRIPTION REPRESSOR HRCA"/>
    <property type="match status" value="1"/>
</dbReference>
<dbReference type="PANTHER" id="PTHR34824:SF1">
    <property type="entry name" value="HEAT-INDUCIBLE TRANSCRIPTION REPRESSOR HRCA"/>
    <property type="match status" value="1"/>
</dbReference>
<dbReference type="Pfam" id="PF01628">
    <property type="entry name" value="HrcA"/>
    <property type="match status" value="1"/>
</dbReference>
<dbReference type="PIRSF" id="PIRSF005485">
    <property type="entry name" value="HrcA"/>
    <property type="match status" value="1"/>
</dbReference>
<dbReference type="SUPFAM" id="SSF55781">
    <property type="entry name" value="GAF domain-like"/>
    <property type="match status" value="1"/>
</dbReference>
<dbReference type="SUPFAM" id="SSF46785">
    <property type="entry name" value="Winged helix' DNA-binding domain"/>
    <property type="match status" value="1"/>
</dbReference>
<keyword id="KW-0678">Repressor</keyword>
<keyword id="KW-0346">Stress response</keyword>
<keyword id="KW-0804">Transcription</keyword>
<keyword id="KW-0805">Transcription regulation</keyword>
<reference key="1">
    <citation type="journal article" date="2011" name="MBio">
        <title>Novel metabolic attributes of the genus Cyanothece, comprising a group of unicellular nitrogen-fixing Cyanobacteria.</title>
        <authorList>
            <person name="Bandyopadhyay A."/>
            <person name="Elvitigala T."/>
            <person name="Welsh E."/>
            <person name="Stockel J."/>
            <person name="Liberton M."/>
            <person name="Min H."/>
            <person name="Sherman L.A."/>
            <person name="Pakrasi H.B."/>
        </authorList>
    </citation>
    <scope>NUCLEOTIDE SEQUENCE [LARGE SCALE GENOMIC DNA]</scope>
    <source>
        <strain>PCC 7425 / ATCC 29141</strain>
    </source>
</reference>
<sequence length="364" mass="40784">MQVRLNERQQQVLWATVRHYIATAEPVGSKALAEEYNLKVSAATIRNIMGALEQGGLLYQPHTSAGRVPSDSGYRIYVDYLMTPANDLSRRVEQLLSDRLNPTSISLEAVLRGAAQILATLSGYITLITLPQTLTATIRWLQLVRVETSRVMLIVVTDNYETRSALMELGDTADTEESRIERELEVLTNFLNHQLRGRSLTELANLDWQQLDREFQRHGDTLRTLLQDLLQRSQPVGSNQILISGLSEVLQQPEFSQLQQVQTILHLLEDEQDQLWPLICEWSVATDAAPITLPSQQRVRILIGSENPLEPMRMCTLVSSTYQRGSVPIGSVGVLGPTRMPYDKVIPLVEATADYLSDTLGQPA</sequence>
<accession>B8HQ19</accession>
<gene>
    <name evidence="1" type="primary">hrcA</name>
    <name type="ordered locus">Cyan7425_5123</name>
</gene>
<protein>
    <recommendedName>
        <fullName evidence="1">Heat-inducible transcription repressor HrcA</fullName>
    </recommendedName>
</protein>
<comment type="function">
    <text evidence="1">Negative regulator of class I heat shock genes (grpE-dnaK-dnaJ and groELS operons). Prevents heat-shock induction of these operons.</text>
</comment>
<comment type="similarity">
    <text evidence="1">Belongs to the HrcA family.</text>
</comment>
<name>HRCA_CYAP4</name>
<feature type="chain" id="PRO_1000118299" description="Heat-inducible transcription repressor HrcA">
    <location>
        <begin position="1"/>
        <end position="364"/>
    </location>
</feature>
<evidence type="ECO:0000255" key="1">
    <source>
        <dbReference type="HAMAP-Rule" id="MF_00081"/>
    </source>
</evidence>